<gene>
    <name type="primary">tmem170a</name>
    <name type="synonym">tmem170</name>
    <name type="ORF">si:dkey-6e12.5</name>
    <name type="ORF">zgc:66371</name>
</gene>
<accession>A3KPL7</accession>
<accession>Q6PCR5</accession>
<dbReference type="EMBL" id="BX088593">
    <property type="protein sequence ID" value="CAM56720.1"/>
    <property type="molecule type" value="Genomic_DNA"/>
</dbReference>
<dbReference type="EMBL" id="BC059199">
    <property type="protein sequence ID" value="AAH59199.1"/>
    <property type="status" value="ALT_INIT"/>
    <property type="molecule type" value="mRNA"/>
</dbReference>
<dbReference type="RefSeq" id="NP_956983.2">
    <property type="nucleotide sequence ID" value="NM_200689.2"/>
</dbReference>
<dbReference type="FunCoup" id="A3KPL7">
    <property type="interactions" value="224"/>
</dbReference>
<dbReference type="STRING" id="7955.ENSDARP00000073614"/>
<dbReference type="GlyCosmos" id="A3KPL7">
    <property type="glycosylation" value="2 sites, No reported glycans"/>
</dbReference>
<dbReference type="PaxDb" id="7955-ENSDARP00000073614"/>
<dbReference type="Ensembl" id="ENSDART00000079158">
    <property type="protein sequence ID" value="ENSDARP00000073614"/>
    <property type="gene ID" value="ENSDARG00000056628"/>
</dbReference>
<dbReference type="Ensembl" id="ENSDART00000191196">
    <property type="protein sequence ID" value="ENSDARP00000154851"/>
    <property type="gene ID" value="ENSDARG00000111549"/>
</dbReference>
<dbReference type="GeneID" id="393662"/>
<dbReference type="KEGG" id="dre:393662"/>
<dbReference type="AGR" id="ZFIN:ZDB-GENE-040426-1622"/>
<dbReference type="CTD" id="124491"/>
<dbReference type="ZFIN" id="ZDB-GENE-040426-1622">
    <property type="gene designation" value="tmem170a"/>
</dbReference>
<dbReference type="eggNOG" id="KOG4349">
    <property type="taxonomic scope" value="Eukaryota"/>
</dbReference>
<dbReference type="HOGENOM" id="CLU_149050_1_1_1"/>
<dbReference type="InParanoid" id="A3KPL7"/>
<dbReference type="OMA" id="GRFMSVG"/>
<dbReference type="OrthoDB" id="13807at2759"/>
<dbReference type="PhylomeDB" id="A3KPL7"/>
<dbReference type="TreeFam" id="TF314615"/>
<dbReference type="PRO" id="PR:A3KPL7"/>
<dbReference type="Proteomes" id="UP000000437">
    <property type="component" value="Alternate scaffold 18"/>
</dbReference>
<dbReference type="Proteomes" id="UP000000437">
    <property type="component" value="Chromosome 18"/>
</dbReference>
<dbReference type="Bgee" id="ENSDARG00000056628">
    <property type="expression patterns" value="Expressed in mature ovarian follicle and 19 other cell types or tissues"/>
</dbReference>
<dbReference type="GO" id="GO:0005789">
    <property type="term" value="C:endoplasmic reticulum membrane"/>
    <property type="evidence" value="ECO:0000250"/>
    <property type="project" value="UniProtKB"/>
</dbReference>
<dbReference type="GO" id="GO:0005635">
    <property type="term" value="C:nuclear envelope"/>
    <property type="evidence" value="ECO:0000250"/>
    <property type="project" value="UniProtKB"/>
</dbReference>
<dbReference type="GO" id="GO:0071786">
    <property type="term" value="P:endoplasmic reticulum tubular network organization"/>
    <property type="evidence" value="ECO:0000250"/>
    <property type="project" value="UniProtKB"/>
</dbReference>
<dbReference type="InterPro" id="IPR019334">
    <property type="entry name" value="Transmembrane_pr_170"/>
</dbReference>
<dbReference type="PANTHER" id="PTHR22779">
    <property type="entry name" value="SD17342P"/>
    <property type="match status" value="1"/>
</dbReference>
<dbReference type="PANTHER" id="PTHR22779:SF2">
    <property type="entry name" value="TRANSMEMBRANE PROTEIN 170A"/>
    <property type="match status" value="1"/>
</dbReference>
<dbReference type="Pfam" id="PF10190">
    <property type="entry name" value="Tmemb_170"/>
    <property type="match status" value="1"/>
</dbReference>
<comment type="function">
    <text evidence="1">May regulate membrane morphogenesis in the endoplasmic reticulum (ER) by promoting ER sheet formation at the expense of ER tubules.</text>
</comment>
<comment type="subcellular location">
    <subcellularLocation>
        <location evidence="1">Endoplasmic reticulum membrane</location>
        <topology evidence="2">Multi-pass membrane protein</topology>
    </subcellularLocation>
    <subcellularLocation>
        <location evidence="1">Nucleus envelope</location>
    </subcellularLocation>
</comment>
<comment type="similarity">
    <text evidence="3">Belongs to the TMEM170 family.</text>
</comment>
<comment type="sequence caution" evidence="3">
    <conflict type="erroneous initiation">
        <sequence resource="EMBL-CDS" id="AAH59199"/>
    </conflict>
</comment>
<evidence type="ECO:0000250" key="1">
    <source>
        <dbReference type="UniProtKB" id="Q8WVE7"/>
    </source>
</evidence>
<evidence type="ECO:0000255" key="2"/>
<evidence type="ECO:0000305" key="3"/>
<sequence>MIEALIVGEMQDVQIGFVKQILSLNLVPRSNNTTCGNNTSLCDFSEMWYGVFLWAVVSSLIFHLPAALLALATLRRHKVARFFPLGILLMGIIGPLFGGVLTSAAIAGVYKAAGKSMFSLEALVFGVGQSLFIFIISFLRILATL</sequence>
<keyword id="KW-0256">Endoplasmic reticulum</keyword>
<keyword id="KW-0325">Glycoprotein</keyword>
<keyword id="KW-0472">Membrane</keyword>
<keyword id="KW-0539">Nucleus</keyword>
<keyword id="KW-1185">Reference proteome</keyword>
<keyword id="KW-0812">Transmembrane</keyword>
<keyword id="KW-1133">Transmembrane helix</keyword>
<feature type="chain" id="PRO_0000291762" description="Transmembrane protein 170A">
    <location>
        <begin position="1"/>
        <end position="145"/>
    </location>
</feature>
<feature type="topological domain" description="Lumenal" evidence="1">
    <location>
        <begin position="1"/>
        <end position="50"/>
    </location>
</feature>
<feature type="transmembrane region" description="Helical" evidence="2">
    <location>
        <begin position="51"/>
        <end position="71"/>
    </location>
</feature>
<feature type="topological domain" description="Cytoplasmic" evidence="1">
    <location>
        <begin position="72"/>
        <end position="81"/>
    </location>
</feature>
<feature type="transmembrane region" description="Helical" evidence="2">
    <location>
        <begin position="82"/>
        <end position="102"/>
    </location>
</feature>
<feature type="topological domain" description="Lumenal" evidence="1">
    <location>
        <begin position="103"/>
        <end position="117"/>
    </location>
</feature>
<feature type="transmembrane region" description="Helical" evidence="2">
    <location>
        <begin position="118"/>
        <end position="138"/>
    </location>
</feature>
<feature type="topological domain" description="Cytoplasmic" evidence="1">
    <location>
        <begin position="139"/>
        <end position="145"/>
    </location>
</feature>
<feature type="glycosylation site" description="N-linked (GlcNAc...) asparagine" evidence="2">
    <location>
        <position position="31"/>
    </location>
</feature>
<feature type="glycosylation site" description="N-linked (GlcNAc...) asparagine" evidence="2">
    <location>
        <position position="37"/>
    </location>
</feature>
<feature type="sequence conflict" description="In Ref. 2; AAH59199." evidence="3" ref="2">
    <original>I</original>
    <variation>T</variation>
    <location>
        <position position="61"/>
    </location>
</feature>
<name>T170A_DANRE</name>
<protein>
    <recommendedName>
        <fullName>Transmembrane protein 170A</fullName>
    </recommendedName>
</protein>
<reference key="1">
    <citation type="journal article" date="2013" name="Nature">
        <title>The zebrafish reference genome sequence and its relationship to the human genome.</title>
        <authorList>
            <person name="Howe K."/>
            <person name="Clark M.D."/>
            <person name="Torroja C.F."/>
            <person name="Torrance J."/>
            <person name="Berthelot C."/>
            <person name="Muffato M."/>
            <person name="Collins J.E."/>
            <person name="Humphray S."/>
            <person name="McLaren K."/>
            <person name="Matthews L."/>
            <person name="McLaren S."/>
            <person name="Sealy I."/>
            <person name="Caccamo M."/>
            <person name="Churcher C."/>
            <person name="Scott C."/>
            <person name="Barrett J.C."/>
            <person name="Koch R."/>
            <person name="Rauch G.J."/>
            <person name="White S."/>
            <person name="Chow W."/>
            <person name="Kilian B."/>
            <person name="Quintais L.T."/>
            <person name="Guerra-Assuncao J.A."/>
            <person name="Zhou Y."/>
            <person name="Gu Y."/>
            <person name="Yen J."/>
            <person name="Vogel J.H."/>
            <person name="Eyre T."/>
            <person name="Redmond S."/>
            <person name="Banerjee R."/>
            <person name="Chi J."/>
            <person name="Fu B."/>
            <person name="Langley E."/>
            <person name="Maguire S.F."/>
            <person name="Laird G.K."/>
            <person name="Lloyd D."/>
            <person name="Kenyon E."/>
            <person name="Donaldson S."/>
            <person name="Sehra H."/>
            <person name="Almeida-King J."/>
            <person name="Loveland J."/>
            <person name="Trevanion S."/>
            <person name="Jones M."/>
            <person name="Quail M."/>
            <person name="Willey D."/>
            <person name="Hunt A."/>
            <person name="Burton J."/>
            <person name="Sims S."/>
            <person name="McLay K."/>
            <person name="Plumb B."/>
            <person name="Davis J."/>
            <person name="Clee C."/>
            <person name="Oliver K."/>
            <person name="Clark R."/>
            <person name="Riddle C."/>
            <person name="Elliot D."/>
            <person name="Threadgold G."/>
            <person name="Harden G."/>
            <person name="Ware D."/>
            <person name="Begum S."/>
            <person name="Mortimore B."/>
            <person name="Kerry G."/>
            <person name="Heath P."/>
            <person name="Phillimore B."/>
            <person name="Tracey A."/>
            <person name="Corby N."/>
            <person name="Dunn M."/>
            <person name="Johnson C."/>
            <person name="Wood J."/>
            <person name="Clark S."/>
            <person name="Pelan S."/>
            <person name="Griffiths G."/>
            <person name="Smith M."/>
            <person name="Glithero R."/>
            <person name="Howden P."/>
            <person name="Barker N."/>
            <person name="Lloyd C."/>
            <person name="Stevens C."/>
            <person name="Harley J."/>
            <person name="Holt K."/>
            <person name="Panagiotidis G."/>
            <person name="Lovell J."/>
            <person name="Beasley H."/>
            <person name="Henderson C."/>
            <person name="Gordon D."/>
            <person name="Auger K."/>
            <person name="Wright D."/>
            <person name="Collins J."/>
            <person name="Raisen C."/>
            <person name="Dyer L."/>
            <person name="Leung K."/>
            <person name="Robertson L."/>
            <person name="Ambridge K."/>
            <person name="Leongamornlert D."/>
            <person name="McGuire S."/>
            <person name="Gilderthorp R."/>
            <person name="Griffiths C."/>
            <person name="Manthravadi D."/>
            <person name="Nichol S."/>
            <person name="Barker G."/>
            <person name="Whitehead S."/>
            <person name="Kay M."/>
            <person name="Brown J."/>
            <person name="Murnane C."/>
            <person name="Gray E."/>
            <person name="Humphries M."/>
            <person name="Sycamore N."/>
            <person name="Barker D."/>
            <person name="Saunders D."/>
            <person name="Wallis J."/>
            <person name="Babbage A."/>
            <person name="Hammond S."/>
            <person name="Mashreghi-Mohammadi M."/>
            <person name="Barr L."/>
            <person name="Martin S."/>
            <person name="Wray P."/>
            <person name="Ellington A."/>
            <person name="Matthews N."/>
            <person name="Ellwood M."/>
            <person name="Woodmansey R."/>
            <person name="Clark G."/>
            <person name="Cooper J."/>
            <person name="Tromans A."/>
            <person name="Grafham D."/>
            <person name="Skuce C."/>
            <person name="Pandian R."/>
            <person name="Andrews R."/>
            <person name="Harrison E."/>
            <person name="Kimberley A."/>
            <person name="Garnett J."/>
            <person name="Fosker N."/>
            <person name="Hall R."/>
            <person name="Garner P."/>
            <person name="Kelly D."/>
            <person name="Bird C."/>
            <person name="Palmer S."/>
            <person name="Gehring I."/>
            <person name="Berger A."/>
            <person name="Dooley C.M."/>
            <person name="Ersan-Urun Z."/>
            <person name="Eser C."/>
            <person name="Geiger H."/>
            <person name="Geisler M."/>
            <person name="Karotki L."/>
            <person name="Kirn A."/>
            <person name="Konantz J."/>
            <person name="Konantz M."/>
            <person name="Oberlander M."/>
            <person name="Rudolph-Geiger S."/>
            <person name="Teucke M."/>
            <person name="Lanz C."/>
            <person name="Raddatz G."/>
            <person name="Osoegawa K."/>
            <person name="Zhu B."/>
            <person name="Rapp A."/>
            <person name="Widaa S."/>
            <person name="Langford C."/>
            <person name="Yang F."/>
            <person name="Schuster S.C."/>
            <person name="Carter N.P."/>
            <person name="Harrow J."/>
            <person name="Ning Z."/>
            <person name="Herrero J."/>
            <person name="Searle S.M."/>
            <person name="Enright A."/>
            <person name="Geisler R."/>
            <person name="Plasterk R.H."/>
            <person name="Lee C."/>
            <person name="Westerfield M."/>
            <person name="de Jong P.J."/>
            <person name="Zon L.I."/>
            <person name="Postlethwait J.H."/>
            <person name="Nusslein-Volhard C."/>
            <person name="Hubbard T.J."/>
            <person name="Roest Crollius H."/>
            <person name="Rogers J."/>
            <person name="Stemple D.L."/>
        </authorList>
    </citation>
    <scope>NUCLEOTIDE SEQUENCE [LARGE SCALE GENOMIC DNA]</scope>
    <source>
        <strain>Tuebingen</strain>
    </source>
</reference>
<reference key="2">
    <citation type="submission" date="2003-10" db="EMBL/GenBank/DDBJ databases">
        <authorList>
            <consortium name="NIH - Zebrafish Gene Collection (ZGC) project"/>
        </authorList>
    </citation>
    <scope>NUCLEOTIDE SEQUENCE [LARGE SCALE MRNA]</scope>
</reference>
<proteinExistence type="evidence at transcript level"/>
<organism>
    <name type="scientific">Danio rerio</name>
    <name type="common">Zebrafish</name>
    <name type="synonym">Brachydanio rerio</name>
    <dbReference type="NCBI Taxonomy" id="7955"/>
    <lineage>
        <taxon>Eukaryota</taxon>
        <taxon>Metazoa</taxon>
        <taxon>Chordata</taxon>
        <taxon>Craniata</taxon>
        <taxon>Vertebrata</taxon>
        <taxon>Euteleostomi</taxon>
        <taxon>Actinopterygii</taxon>
        <taxon>Neopterygii</taxon>
        <taxon>Teleostei</taxon>
        <taxon>Ostariophysi</taxon>
        <taxon>Cypriniformes</taxon>
        <taxon>Danionidae</taxon>
        <taxon>Danioninae</taxon>
        <taxon>Danio</taxon>
    </lineage>
</organism>